<gene>
    <name evidence="1" type="primary">rpoC</name>
    <name type="ordered locus">Shew_0152</name>
</gene>
<accession>A3Q976</accession>
<keyword id="KW-0240">DNA-directed RNA polymerase</keyword>
<keyword id="KW-0460">Magnesium</keyword>
<keyword id="KW-0479">Metal-binding</keyword>
<keyword id="KW-0548">Nucleotidyltransferase</keyword>
<keyword id="KW-1185">Reference proteome</keyword>
<keyword id="KW-0804">Transcription</keyword>
<keyword id="KW-0808">Transferase</keyword>
<keyword id="KW-0862">Zinc</keyword>
<protein>
    <recommendedName>
        <fullName evidence="1">DNA-directed RNA polymerase subunit beta'</fullName>
        <shortName evidence="1">RNAP subunit beta'</shortName>
        <ecNumber evidence="1">2.7.7.6</ecNumber>
    </recommendedName>
    <alternativeName>
        <fullName evidence="1">RNA polymerase subunit beta'</fullName>
    </alternativeName>
    <alternativeName>
        <fullName evidence="1">Transcriptase subunit beta'</fullName>
    </alternativeName>
</protein>
<organism>
    <name type="scientific">Shewanella loihica (strain ATCC BAA-1088 / PV-4)</name>
    <dbReference type="NCBI Taxonomy" id="323850"/>
    <lineage>
        <taxon>Bacteria</taxon>
        <taxon>Pseudomonadati</taxon>
        <taxon>Pseudomonadota</taxon>
        <taxon>Gammaproteobacteria</taxon>
        <taxon>Alteromonadales</taxon>
        <taxon>Shewanellaceae</taxon>
        <taxon>Shewanella</taxon>
    </lineage>
</organism>
<evidence type="ECO:0000255" key="1">
    <source>
        <dbReference type="HAMAP-Rule" id="MF_01322"/>
    </source>
</evidence>
<proteinExistence type="inferred from homology"/>
<feature type="chain" id="PRO_0000353431" description="DNA-directed RNA polymerase subunit beta'">
    <location>
        <begin position="1"/>
        <end position="1404"/>
    </location>
</feature>
<feature type="binding site" evidence="1">
    <location>
        <position position="70"/>
    </location>
    <ligand>
        <name>Zn(2+)</name>
        <dbReference type="ChEBI" id="CHEBI:29105"/>
        <label>1</label>
    </ligand>
</feature>
<feature type="binding site" evidence="1">
    <location>
        <position position="72"/>
    </location>
    <ligand>
        <name>Zn(2+)</name>
        <dbReference type="ChEBI" id="CHEBI:29105"/>
        <label>1</label>
    </ligand>
</feature>
<feature type="binding site" evidence="1">
    <location>
        <position position="85"/>
    </location>
    <ligand>
        <name>Zn(2+)</name>
        <dbReference type="ChEBI" id="CHEBI:29105"/>
        <label>1</label>
    </ligand>
</feature>
<feature type="binding site" evidence="1">
    <location>
        <position position="88"/>
    </location>
    <ligand>
        <name>Zn(2+)</name>
        <dbReference type="ChEBI" id="CHEBI:29105"/>
        <label>1</label>
    </ligand>
</feature>
<feature type="binding site" evidence="1">
    <location>
        <position position="460"/>
    </location>
    <ligand>
        <name>Mg(2+)</name>
        <dbReference type="ChEBI" id="CHEBI:18420"/>
    </ligand>
</feature>
<feature type="binding site" evidence="1">
    <location>
        <position position="462"/>
    </location>
    <ligand>
        <name>Mg(2+)</name>
        <dbReference type="ChEBI" id="CHEBI:18420"/>
    </ligand>
</feature>
<feature type="binding site" evidence="1">
    <location>
        <position position="464"/>
    </location>
    <ligand>
        <name>Mg(2+)</name>
        <dbReference type="ChEBI" id="CHEBI:18420"/>
    </ligand>
</feature>
<feature type="binding site" evidence="1">
    <location>
        <position position="814"/>
    </location>
    <ligand>
        <name>Zn(2+)</name>
        <dbReference type="ChEBI" id="CHEBI:29105"/>
        <label>2</label>
    </ligand>
</feature>
<feature type="binding site" evidence="1">
    <location>
        <position position="888"/>
    </location>
    <ligand>
        <name>Zn(2+)</name>
        <dbReference type="ChEBI" id="CHEBI:29105"/>
        <label>2</label>
    </ligand>
</feature>
<feature type="binding site" evidence="1">
    <location>
        <position position="895"/>
    </location>
    <ligand>
        <name>Zn(2+)</name>
        <dbReference type="ChEBI" id="CHEBI:29105"/>
        <label>2</label>
    </ligand>
</feature>
<feature type="binding site" evidence="1">
    <location>
        <position position="898"/>
    </location>
    <ligand>
        <name>Zn(2+)</name>
        <dbReference type="ChEBI" id="CHEBI:29105"/>
        <label>2</label>
    </ligand>
</feature>
<comment type="function">
    <text evidence="1">DNA-dependent RNA polymerase catalyzes the transcription of DNA into RNA using the four ribonucleoside triphosphates as substrates.</text>
</comment>
<comment type="catalytic activity">
    <reaction evidence="1">
        <text>RNA(n) + a ribonucleoside 5'-triphosphate = RNA(n+1) + diphosphate</text>
        <dbReference type="Rhea" id="RHEA:21248"/>
        <dbReference type="Rhea" id="RHEA-COMP:14527"/>
        <dbReference type="Rhea" id="RHEA-COMP:17342"/>
        <dbReference type="ChEBI" id="CHEBI:33019"/>
        <dbReference type="ChEBI" id="CHEBI:61557"/>
        <dbReference type="ChEBI" id="CHEBI:140395"/>
        <dbReference type="EC" id="2.7.7.6"/>
    </reaction>
</comment>
<comment type="cofactor">
    <cofactor evidence="1">
        <name>Mg(2+)</name>
        <dbReference type="ChEBI" id="CHEBI:18420"/>
    </cofactor>
    <text evidence="1">Binds 1 Mg(2+) ion per subunit.</text>
</comment>
<comment type="cofactor">
    <cofactor evidence="1">
        <name>Zn(2+)</name>
        <dbReference type="ChEBI" id="CHEBI:29105"/>
    </cofactor>
    <text evidence="1">Binds 2 Zn(2+) ions per subunit.</text>
</comment>
<comment type="subunit">
    <text evidence="1">The RNAP catalytic core consists of 2 alpha, 1 beta, 1 beta' and 1 omega subunit. When a sigma factor is associated with the core the holoenzyme is formed, which can initiate transcription.</text>
</comment>
<comment type="similarity">
    <text evidence="1">Belongs to the RNA polymerase beta' chain family.</text>
</comment>
<name>RPOC_SHELP</name>
<sequence length="1404" mass="155354">MKDLLKFLKQQSKTEEFEGIKIGLASPDLIRSWSFGEVKKPETINYRTFKPEREGLFCARIFGPVKDYECLCGKYKRLKHRGVICEKCGVEVTQTKVRRERMGHIDLASPVAHIWFLKSLPSRIGLMLDMTLRDIERVLYFESFVVIEPGMTSLERGQMLTEENYLDALEEYGDEFEAKMGAEAVLELLRAIDLEKEIEEMREELPSINSETRRKKITKRLKLIEAFYQSGNKPEWMILKVLPVLPPDLRPLVPLDGGRFATSDLNDLYRRVINRNNRLKRLLDLAAPDIIVRNEKRMLQESVDALLDNGRRGRAITGSNKRPLKSLADMIKGKQGRFRQNLLGKRVDYSGRSVITVGPTLRLHQCGLPKKMALELFKPFIYGKLEGRGLATTIKAAKKMVEREVPEVWDVLDDVIREHPVMLNRAPTLHRLGIQAFEPVLIEGKAIQLHPLVCAAYNADFDGDQMAVHVPLTLEAQLEARSLMMSTNNILSPANGEPVITPSQDVVLGLYYTSRERINGRGEGMAFESVAEVEKAYRTGVAELHARVKVRITETTIAEDGERTESRRIVDTTVGRALLSQVLPKGLSYDLVNQNMGKKQISKLLNTCYRQLGLKDTVIFADQLMYTGFHFATVSGASVGINDMVIPDEKYSLVADAEAEVLEIQEQFQSGLVTAGERYNKVIDIWASANEKVSKAMMDNLSTETVINRDGEEETQASFNSIYMMADSGARGSAAQIRQLAGMRGLMAKPDGSIIETPITANFREGLNVLQYFISTHGARKGLADTALKTANSGYLTRRLVDVAQDLVVIEDDCGTHEGLTMKPLIEGGDVVEPLRERVLGRVVAEDVYYPGTEDVLAPRNTLLDEAWCDKLEEHSIDEVKVRSVISCDTDFGVCAACYGRDLARGHLINQGEAIGVVAAQSIGEPGTQLTMRTFHIGGAASRASAENNVQVKNAGTVKLHNAKHVTNSDGKLVIVSRSSEIAIIDELGREKERYKVPYGTVLEKLEDATVNAGEVIANRDPHTHPIVSEVAGSIKFVDMIEGVTMTRQTDELTGLSSIVVMDVGQRPTAGKEMRPAIRLVGADGNDLMIPGTEVPAQYFLPGKAIVNQDDNAQIAVGDALARIPQESSKTRDITGGLPRVADLFEARKPKEPAILAEYSGTISFGKETKGKRRLVITPADGGKPYEEMIPKWRNLNVFEGEKVERGEVIADGPEAAHDILRLRGIHKVANYIVNEVQDVYRLQGVKINDKHIEVIIRQMLRKCEITEAGDSEFLPGEQVEVSRVKIANRELEAQGKEPAKFERELLGITKASLATESFISAASFQETTRVLTEAAVGGKSDKLRGLKENVIVGRLIPAGTGYAYHTSRNQAAQNGPAEEVPAISASEAEQNLADLLNLAGSPE</sequence>
<reference key="1">
    <citation type="submission" date="2007-03" db="EMBL/GenBank/DDBJ databases">
        <title>Complete sequence of Shewanella loihica PV-4.</title>
        <authorList>
            <consortium name="US DOE Joint Genome Institute"/>
            <person name="Copeland A."/>
            <person name="Lucas S."/>
            <person name="Lapidus A."/>
            <person name="Barry K."/>
            <person name="Detter J.C."/>
            <person name="Glavina del Rio T."/>
            <person name="Hammon N."/>
            <person name="Israni S."/>
            <person name="Dalin E."/>
            <person name="Tice H."/>
            <person name="Pitluck S."/>
            <person name="Chain P."/>
            <person name="Malfatti S."/>
            <person name="Shin M."/>
            <person name="Vergez L."/>
            <person name="Schmutz J."/>
            <person name="Larimer F."/>
            <person name="Land M."/>
            <person name="Hauser L."/>
            <person name="Kyrpides N."/>
            <person name="Mikhailova N."/>
            <person name="Romine M.F."/>
            <person name="Serres G."/>
            <person name="Fredrickson J."/>
            <person name="Tiedje J."/>
            <person name="Richardson P."/>
        </authorList>
    </citation>
    <scope>NUCLEOTIDE SEQUENCE [LARGE SCALE GENOMIC DNA]</scope>
    <source>
        <strain>ATCC BAA-1088 / PV-4</strain>
    </source>
</reference>
<dbReference type="EC" id="2.7.7.6" evidence="1"/>
<dbReference type="EMBL" id="CP000606">
    <property type="protein sequence ID" value="ABO22024.1"/>
    <property type="molecule type" value="Genomic_DNA"/>
</dbReference>
<dbReference type="RefSeq" id="WP_011863961.1">
    <property type="nucleotide sequence ID" value="NC_009092.1"/>
</dbReference>
<dbReference type="SMR" id="A3Q976"/>
<dbReference type="STRING" id="323850.Shew_0152"/>
<dbReference type="KEGG" id="slo:Shew_0152"/>
<dbReference type="eggNOG" id="COG0086">
    <property type="taxonomic scope" value="Bacteria"/>
</dbReference>
<dbReference type="HOGENOM" id="CLU_000524_3_1_6"/>
<dbReference type="OrthoDB" id="9815296at2"/>
<dbReference type="Proteomes" id="UP000001558">
    <property type="component" value="Chromosome"/>
</dbReference>
<dbReference type="GO" id="GO:0000428">
    <property type="term" value="C:DNA-directed RNA polymerase complex"/>
    <property type="evidence" value="ECO:0007669"/>
    <property type="project" value="UniProtKB-KW"/>
</dbReference>
<dbReference type="GO" id="GO:0003677">
    <property type="term" value="F:DNA binding"/>
    <property type="evidence" value="ECO:0007669"/>
    <property type="project" value="UniProtKB-UniRule"/>
</dbReference>
<dbReference type="GO" id="GO:0003899">
    <property type="term" value="F:DNA-directed RNA polymerase activity"/>
    <property type="evidence" value="ECO:0007669"/>
    <property type="project" value="UniProtKB-UniRule"/>
</dbReference>
<dbReference type="GO" id="GO:0000287">
    <property type="term" value="F:magnesium ion binding"/>
    <property type="evidence" value="ECO:0007669"/>
    <property type="project" value="UniProtKB-UniRule"/>
</dbReference>
<dbReference type="GO" id="GO:0008270">
    <property type="term" value="F:zinc ion binding"/>
    <property type="evidence" value="ECO:0007669"/>
    <property type="project" value="UniProtKB-UniRule"/>
</dbReference>
<dbReference type="GO" id="GO:0006351">
    <property type="term" value="P:DNA-templated transcription"/>
    <property type="evidence" value="ECO:0007669"/>
    <property type="project" value="UniProtKB-UniRule"/>
</dbReference>
<dbReference type="CDD" id="cd02655">
    <property type="entry name" value="RNAP_beta'_C"/>
    <property type="match status" value="1"/>
</dbReference>
<dbReference type="CDD" id="cd01609">
    <property type="entry name" value="RNAP_beta'_N"/>
    <property type="match status" value="1"/>
</dbReference>
<dbReference type="FunFam" id="1.10.132.30:FF:000003">
    <property type="entry name" value="DNA-directed RNA polymerase subunit beta"/>
    <property type="match status" value="1"/>
</dbReference>
<dbReference type="FunFam" id="1.10.150.390:FF:000002">
    <property type="entry name" value="DNA-directed RNA polymerase subunit beta"/>
    <property type="match status" value="1"/>
</dbReference>
<dbReference type="FunFam" id="1.10.40.90:FF:000001">
    <property type="entry name" value="DNA-directed RNA polymerase subunit beta"/>
    <property type="match status" value="1"/>
</dbReference>
<dbReference type="FunFam" id="4.10.860.120:FF:000001">
    <property type="entry name" value="DNA-directed RNA polymerase subunit beta"/>
    <property type="match status" value="1"/>
</dbReference>
<dbReference type="Gene3D" id="1.10.132.30">
    <property type="match status" value="1"/>
</dbReference>
<dbReference type="Gene3D" id="1.10.150.390">
    <property type="match status" value="1"/>
</dbReference>
<dbReference type="Gene3D" id="1.10.1790.20">
    <property type="match status" value="1"/>
</dbReference>
<dbReference type="Gene3D" id="1.10.40.90">
    <property type="match status" value="1"/>
</dbReference>
<dbReference type="Gene3D" id="2.40.40.20">
    <property type="match status" value="1"/>
</dbReference>
<dbReference type="Gene3D" id="2.40.50.100">
    <property type="match status" value="3"/>
</dbReference>
<dbReference type="Gene3D" id="4.10.860.120">
    <property type="entry name" value="RNA polymerase II, clamp domain"/>
    <property type="match status" value="1"/>
</dbReference>
<dbReference type="Gene3D" id="1.10.274.100">
    <property type="entry name" value="RNA polymerase Rpb1, domain 3"/>
    <property type="match status" value="2"/>
</dbReference>
<dbReference type="HAMAP" id="MF_01322">
    <property type="entry name" value="RNApol_bact_RpoC"/>
    <property type="match status" value="1"/>
</dbReference>
<dbReference type="InterPro" id="IPR045867">
    <property type="entry name" value="DNA-dir_RpoC_beta_prime"/>
</dbReference>
<dbReference type="InterPro" id="IPR012754">
    <property type="entry name" value="DNA-dir_RpoC_beta_prime_bact"/>
</dbReference>
<dbReference type="InterPro" id="IPR000722">
    <property type="entry name" value="RNA_pol_asu"/>
</dbReference>
<dbReference type="InterPro" id="IPR006592">
    <property type="entry name" value="RNA_pol_N"/>
</dbReference>
<dbReference type="InterPro" id="IPR007080">
    <property type="entry name" value="RNA_pol_Rpb1_1"/>
</dbReference>
<dbReference type="InterPro" id="IPR007066">
    <property type="entry name" value="RNA_pol_Rpb1_3"/>
</dbReference>
<dbReference type="InterPro" id="IPR042102">
    <property type="entry name" value="RNA_pol_Rpb1_3_sf"/>
</dbReference>
<dbReference type="InterPro" id="IPR007083">
    <property type="entry name" value="RNA_pol_Rpb1_4"/>
</dbReference>
<dbReference type="InterPro" id="IPR007081">
    <property type="entry name" value="RNA_pol_Rpb1_5"/>
</dbReference>
<dbReference type="InterPro" id="IPR044893">
    <property type="entry name" value="RNA_pol_Rpb1_clamp_domain"/>
</dbReference>
<dbReference type="InterPro" id="IPR038120">
    <property type="entry name" value="Rpb1_funnel_sf"/>
</dbReference>
<dbReference type="NCBIfam" id="TIGR02386">
    <property type="entry name" value="rpoC_TIGR"/>
    <property type="match status" value="1"/>
</dbReference>
<dbReference type="PANTHER" id="PTHR19376">
    <property type="entry name" value="DNA-DIRECTED RNA POLYMERASE"/>
    <property type="match status" value="1"/>
</dbReference>
<dbReference type="PANTHER" id="PTHR19376:SF54">
    <property type="entry name" value="DNA-DIRECTED RNA POLYMERASE SUBUNIT BETA"/>
    <property type="match status" value="1"/>
</dbReference>
<dbReference type="Pfam" id="PF04997">
    <property type="entry name" value="RNA_pol_Rpb1_1"/>
    <property type="match status" value="1"/>
</dbReference>
<dbReference type="Pfam" id="PF00623">
    <property type="entry name" value="RNA_pol_Rpb1_2"/>
    <property type="match status" value="2"/>
</dbReference>
<dbReference type="Pfam" id="PF04983">
    <property type="entry name" value="RNA_pol_Rpb1_3"/>
    <property type="match status" value="1"/>
</dbReference>
<dbReference type="Pfam" id="PF05000">
    <property type="entry name" value="RNA_pol_Rpb1_4"/>
    <property type="match status" value="1"/>
</dbReference>
<dbReference type="Pfam" id="PF04998">
    <property type="entry name" value="RNA_pol_Rpb1_5"/>
    <property type="match status" value="1"/>
</dbReference>
<dbReference type="SMART" id="SM00663">
    <property type="entry name" value="RPOLA_N"/>
    <property type="match status" value="1"/>
</dbReference>
<dbReference type="SUPFAM" id="SSF64484">
    <property type="entry name" value="beta and beta-prime subunits of DNA dependent RNA-polymerase"/>
    <property type="match status" value="1"/>
</dbReference>